<accession>B2LMK5</accession>
<protein>
    <recommendedName>
        <fullName evidence="1">Potassium/proton antiporter CemA</fullName>
    </recommendedName>
    <alternativeName>
        <fullName evidence="1">Chloroplast envelope membrane protein A</fullName>
        <shortName evidence="1">CemA</shortName>
    </alternativeName>
</protein>
<geneLocation type="chloroplast"/>
<evidence type="ECO:0000255" key="1">
    <source>
        <dbReference type="HAMAP-Rule" id="MF_01308"/>
    </source>
</evidence>
<evidence type="ECO:0000305" key="2"/>
<comment type="function">
    <text evidence="1">Contributes to K(+)/H(+) antiport activity by supporting proton efflux to control proton extrusion and homeostasis in chloroplasts in a light-dependent manner to modulate photosynthesis. Prevents excessive induction of non-photochemical quenching (NPQ) under continuous-light conditions. Indirectly promotes efficient inorganic carbon uptake into chloroplasts.</text>
</comment>
<comment type="catalytic activity">
    <reaction evidence="1">
        <text>K(+)(in) + H(+)(out) = K(+)(out) + H(+)(in)</text>
        <dbReference type="Rhea" id="RHEA:29467"/>
        <dbReference type="ChEBI" id="CHEBI:15378"/>
        <dbReference type="ChEBI" id="CHEBI:29103"/>
    </reaction>
</comment>
<comment type="subcellular location">
    <subcellularLocation>
        <location evidence="1">Plastid</location>
        <location evidence="1">Chloroplast inner membrane</location>
        <topology evidence="1">Multi-pass membrane protein</topology>
    </subcellularLocation>
</comment>
<comment type="similarity">
    <text evidence="1 2">Belongs to the CemA family.</text>
</comment>
<organism>
    <name type="scientific">Guizotia abyssinica</name>
    <name type="common">Niger</name>
    <name type="synonym">Ramtilla</name>
    <dbReference type="NCBI Taxonomy" id="4230"/>
    <lineage>
        <taxon>Eukaryota</taxon>
        <taxon>Viridiplantae</taxon>
        <taxon>Streptophyta</taxon>
        <taxon>Embryophyta</taxon>
        <taxon>Tracheophyta</taxon>
        <taxon>Spermatophyta</taxon>
        <taxon>Magnoliopsida</taxon>
        <taxon>eudicotyledons</taxon>
        <taxon>Gunneridae</taxon>
        <taxon>Pentapetalae</taxon>
        <taxon>asterids</taxon>
        <taxon>campanulids</taxon>
        <taxon>Asterales</taxon>
        <taxon>Asteraceae</taxon>
        <taxon>Asteroideae</taxon>
        <taxon>Heliantheae alliance</taxon>
        <taxon>Millerieae</taxon>
        <taxon>Guizotia</taxon>
    </lineage>
</organism>
<keyword id="KW-0050">Antiport</keyword>
<keyword id="KW-0150">Chloroplast</keyword>
<keyword id="KW-0375">Hydrogen ion transport</keyword>
<keyword id="KW-0406">Ion transport</keyword>
<keyword id="KW-0472">Membrane</keyword>
<keyword id="KW-0934">Plastid</keyword>
<keyword id="KW-1001">Plastid inner membrane</keyword>
<keyword id="KW-0630">Potassium</keyword>
<keyword id="KW-0633">Potassium transport</keyword>
<keyword id="KW-0812">Transmembrane</keyword>
<keyword id="KW-1133">Transmembrane helix</keyword>
<keyword id="KW-0813">Transport</keyword>
<sequence length="229" mass="27017">MAKKKAFTPLLYLASIVFLPWWISLLFQKSLESWVTNWWNTRQSETFLNDIEEKSILEKFIELEELLFLEEMIKEYSETHLQNLRIGIHKETIQLIKIHNEGRIHTILHFSTNIICFIILSGYSIFGNKELVILNSWAQEFLYNLSDTIKAFSLLLLTDLCIGFHSPHGWELMIGFVYKDFGFVHNDQIISGLVSTFPVILDTIFKYWIFRYLNRVSPSLVVIYHSMND</sequence>
<reference key="1">
    <citation type="submission" date="2008-03" db="EMBL/GenBank/DDBJ databases">
        <title>Guizotia abyssinica chloroplast sequenced using Solexa.</title>
        <authorList>
            <person name="Kane N.C."/>
            <person name="Dempewolf H."/>
            <person name="Stewart M.L."/>
            <person name="Cronk Q."/>
            <person name="Rieseberrg L.H."/>
        </authorList>
    </citation>
    <scope>NUCLEOTIDE SEQUENCE [LARGE SCALE GENOMIC DNA]</scope>
    <source>
        <strain>cv. PI 508077</strain>
    </source>
</reference>
<proteinExistence type="inferred from homology"/>
<name>CEMA_GUIAB</name>
<feature type="chain" id="PRO_0000346542" description="Potassium/proton antiporter CemA">
    <location>
        <begin position="1"/>
        <end position="229"/>
    </location>
</feature>
<feature type="transmembrane region" description="Helical" evidence="1">
    <location>
        <begin position="7"/>
        <end position="27"/>
    </location>
</feature>
<feature type="transmembrane region" description="Helical" evidence="1">
    <location>
        <begin position="107"/>
        <end position="127"/>
    </location>
</feature>
<feature type="transmembrane region" description="Helical" evidence="1">
    <location>
        <begin position="189"/>
        <end position="209"/>
    </location>
</feature>
<dbReference type="EMBL" id="EU549769">
    <property type="protein sequence ID" value="ACB86539.1"/>
    <property type="molecule type" value="Genomic_DNA"/>
</dbReference>
<dbReference type="RefSeq" id="YP_001837372.1">
    <property type="nucleotide sequence ID" value="NC_010601.1"/>
</dbReference>
<dbReference type="GeneID" id="6219122"/>
<dbReference type="GO" id="GO:0009706">
    <property type="term" value="C:chloroplast inner membrane"/>
    <property type="evidence" value="ECO:0007669"/>
    <property type="project" value="UniProtKB-SubCell"/>
</dbReference>
<dbReference type="GO" id="GO:0015297">
    <property type="term" value="F:antiporter activity"/>
    <property type="evidence" value="ECO:0007669"/>
    <property type="project" value="UniProtKB-KW"/>
</dbReference>
<dbReference type="GO" id="GO:0015078">
    <property type="term" value="F:proton transmembrane transporter activity"/>
    <property type="evidence" value="ECO:0007669"/>
    <property type="project" value="UniProtKB-UniRule"/>
</dbReference>
<dbReference type="GO" id="GO:0006813">
    <property type="term" value="P:potassium ion transport"/>
    <property type="evidence" value="ECO:0007669"/>
    <property type="project" value="UniProtKB-UniRule"/>
</dbReference>
<dbReference type="HAMAP" id="MF_01308">
    <property type="entry name" value="CemA_PxcA"/>
    <property type="match status" value="1"/>
</dbReference>
<dbReference type="InterPro" id="IPR004282">
    <property type="entry name" value="CemA"/>
</dbReference>
<dbReference type="PANTHER" id="PTHR33650:SF2">
    <property type="entry name" value="CHLOROPLAST ENVELOPE MEMBRANE PROTEIN"/>
    <property type="match status" value="1"/>
</dbReference>
<dbReference type="PANTHER" id="PTHR33650">
    <property type="entry name" value="CHLOROPLAST ENVELOPE MEMBRANE PROTEIN-RELATED"/>
    <property type="match status" value="1"/>
</dbReference>
<dbReference type="Pfam" id="PF03040">
    <property type="entry name" value="CemA"/>
    <property type="match status" value="1"/>
</dbReference>
<gene>
    <name evidence="1" type="primary">cemA</name>
    <name type="ordered locus">GuabCp033</name>
</gene>